<sequence>MGNITADNTSMNCDIDHTIHQTLAPVVYVMVLVVGFPANCLSLYYGYLQIKARNELGVYLCNLTVADLFYICSLPFWLQYVLQHDHWSHDDLSCQVCGILLYENIYISVGFLCCISIDRYLAVAHPFRFHQFRTLKAAMGVSALIWVKELLTSIYFLMHEEVVEDADRHRVCFEHYPLEPRQRGINYYRFLVGFLFPICLLLASYRGILRAVRRSHGTQKSRKDQIQRLVLSTVVIFLACFLPYHVLLLVRSLWESSCDFAKGIFNAYHFSLLLTSFNCVADPVLYCFVSETTHRDLARLRGACLAFLTCARTGRAREAYPLGAPEASGKSEDPEVLTRLHPAFQTPHPPGMGGSPAGGLS</sequence>
<comment type="function">
    <text evidence="1 2">Proton-sensing G-protein coupled receptor activated by extracellular pH, which is required to monitor pH changes and generate adaptive reactions (By similarity). The receptor is almost silent at pH 7.8 but fully activated at pH 6.8 (By similarity). Ligand binding causes a conformation change that triggers signaling via guanine nucleotide-binding proteins (G proteins) and modulates the activity of downstream effectors, such as phospholipase C (By similarity). GPR68 is mainly coupled to G(q) G proteins and mediates production of diacylglycerol (DAG) and inositol 1,4,5-trisphosphate (IP3) (By similarity). Acts as a key mechanosensor of fluid shear stress and membrane stretch (By similarity). Expressed in endothelial cells of small-diameter resistance arteries, where it mediates flow-induced dilation in response to shear stress (By similarity). May represents an osteoblastic pH sensor regulating cell-mediated responses to acidosis in bone (By similarity). Acts as a regulator of calcium-sensing receptor CASR in a seesaw manner: GPR68-mediated signaling inhibits CASR signaling in response to protons, while CASR inhibits GPR68 in presence of extracellular calcium (By similarity).</text>
</comment>
<comment type="activity regulation">
    <text evidence="1">Activated by a network of residues that connects an extracellular-facing cavity to Glu-149, a conserved charged residue buried in the transmembrane core of the receptor (By similarity). Protonation likely drives conformational changes in extracellular loop 2 (ECL2), which stabilizes movement of transmembrane 3 (TM3) and a series of rearrangements that connect the extracellular-facing cavity to Glu-149, a residue only conserved in proton-sensing G-protein coupled receptors (By similarity). Activated in an allosteric manner by divalent metal ions at the extracellular surface following the order: Cd(2+) &gt; Co(2+) &gt; Ni(2+) &gt; Zn(2+) &gt; Fe(2+) &gt; Ca(2+) &gt; Mg(2+) (By similarity).</text>
</comment>
<comment type="subcellular location">
    <subcellularLocation>
        <location evidence="1">Cell membrane</location>
        <topology evidence="1">Multi-pass membrane protein</topology>
    </subcellularLocation>
</comment>
<comment type="domain">
    <text evidence="1">A multitude of proton-sensing residues, which include extracellular histidine residues (His-17, His-20, His-84, His-169 and His-269) or triad of buried acidic residues (Asp-67, Glu-149 and Asp-282), contribute to activation of the G-protein coupled receptor activity and pH sensitivity.</text>
</comment>
<comment type="similarity">
    <text evidence="4">Belongs to the G-protein coupled receptor 1 family.</text>
</comment>
<reference key="1">
    <citation type="journal article" date="1997" name="Biochem. Biophys. Res. Commun.">
        <title>Molecular cloning of a bovine renal G-protein coupled receptor gene (bRGR): regulation of bRGR mRNA levels by amino acid availability.</title>
        <authorList>
            <person name="Ferrer-Martinez A."/>
            <person name="Felipe A."/>
            <person name="Mata J.F."/>
            <person name="Casado F.J."/>
            <person name="Pastor-Anglada M."/>
        </authorList>
    </citation>
    <scope>NUCLEOTIDE SEQUENCE [MRNA]</scope>
    <source>
        <tissue>Kidney</tissue>
    </source>
</reference>
<protein>
    <recommendedName>
        <fullName>G-protein coupled receptor 68</fullName>
    </recommendedName>
    <alternativeName>
        <fullName evidence="6">G protein-coupled receptor RGR1</fullName>
        <shortName evidence="6">bRGR1</shortName>
    </alternativeName>
</protein>
<evidence type="ECO:0000250" key="1">
    <source>
        <dbReference type="UniProtKB" id="Q15743"/>
    </source>
</evidence>
<evidence type="ECO:0000250" key="2">
    <source>
        <dbReference type="UniProtKB" id="Q8BFQ3"/>
    </source>
</evidence>
<evidence type="ECO:0000255" key="3"/>
<evidence type="ECO:0000255" key="4">
    <source>
        <dbReference type="PROSITE-ProRule" id="PRU00521"/>
    </source>
</evidence>
<evidence type="ECO:0000256" key="5">
    <source>
        <dbReference type="SAM" id="MobiDB-lite"/>
    </source>
</evidence>
<evidence type="ECO:0000303" key="6">
    <source>
    </source>
</evidence>
<gene>
    <name type="primary">GPR68</name>
</gene>
<name>GPR68_BOVIN</name>
<accession>O46685</accession>
<dbReference type="EMBL" id="U88366">
    <property type="protein sequence ID" value="AAC05611.1"/>
    <property type="molecule type" value="mRNA"/>
</dbReference>
<dbReference type="EMBL" id="U88367">
    <property type="protein sequence ID" value="AAC05612.1"/>
    <property type="molecule type" value="mRNA"/>
</dbReference>
<dbReference type="PIR" id="JC5653">
    <property type="entry name" value="JC5653"/>
</dbReference>
<dbReference type="RefSeq" id="NP_776754.1">
    <property type="nucleotide sequence ID" value="NM_174329.2"/>
</dbReference>
<dbReference type="SMR" id="O46685"/>
<dbReference type="FunCoup" id="O46685">
    <property type="interactions" value="946"/>
</dbReference>
<dbReference type="STRING" id="9913.ENSBTAP00000008858"/>
<dbReference type="GlyCosmos" id="O46685">
    <property type="glycosylation" value="2 sites, No reported glycans"/>
</dbReference>
<dbReference type="GlyGen" id="O46685">
    <property type="glycosylation" value="2 sites"/>
</dbReference>
<dbReference type="PaxDb" id="9913-ENSBTAP00000008858"/>
<dbReference type="GeneID" id="281799"/>
<dbReference type="KEGG" id="bta:281799"/>
<dbReference type="CTD" id="8111"/>
<dbReference type="VEuPathDB" id="HostDB:ENSBTAG00000006738"/>
<dbReference type="eggNOG" id="ENOG502QQJA">
    <property type="taxonomic scope" value="Eukaryota"/>
</dbReference>
<dbReference type="HOGENOM" id="CLU_009579_8_2_1"/>
<dbReference type="InParanoid" id="O46685"/>
<dbReference type="OMA" id="TCCFVFT"/>
<dbReference type="OrthoDB" id="6435638at2759"/>
<dbReference type="TreeFam" id="TF331803"/>
<dbReference type="Reactome" id="R-BTA-373076">
    <property type="pathway name" value="Class A/1 (Rhodopsin-like receptors)"/>
</dbReference>
<dbReference type="Reactome" id="R-BTA-416476">
    <property type="pathway name" value="G alpha (q) signalling events"/>
</dbReference>
<dbReference type="Proteomes" id="UP000009136">
    <property type="component" value="Chromosome 21"/>
</dbReference>
<dbReference type="Bgee" id="ENSBTAG00000006738">
    <property type="expression patterns" value="Expressed in mammary gland and 86 other cell types or tissues"/>
</dbReference>
<dbReference type="GO" id="GO:0005886">
    <property type="term" value="C:plasma membrane"/>
    <property type="evidence" value="ECO:0007669"/>
    <property type="project" value="UniProtKB-SubCell"/>
</dbReference>
<dbReference type="GO" id="GO:0004930">
    <property type="term" value="F:G protein-coupled receptor activity"/>
    <property type="evidence" value="ECO:0007669"/>
    <property type="project" value="UniProtKB-KW"/>
</dbReference>
<dbReference type="GO" id="GO:0071467">
    <property type="term" value="P:cellular response to pH"/>
    <property type="evidence" value="ECO:0000318"/>
    <property type="project" value="GO_Central"/>
</dbReference>
<dbReference type="CDD" id="cd15367">
    <property type="entry name" value="7tmA_GPR68_OGR1"/>
    <property type="match status" value="1"/>
</dbReference>
<dbReference type="FunFam" id="1.20.1070.10:FF:000065">
    <property type="entry name" value="G-protein coupled receptor 4"/>
    <property type="match status" value="1"/>
</dbReference>
<dbReference type="Gene3D" id="1.20.1070.10">
    <property type="entry name" value="Rhodopsin 7-helix transmembrane proteins"/>
    <property type="match status" value="1"/>
</dbReference>
<dbReference type="InterPro" id="IPR000276">
    <property type="entry name" value="GPCR_Rhodpsn"/>
</dbReference>
<dbReference type="InterPro" id="IPR017452">
    <property type="entry name" value="GPCR_Rhodpsn_7TM"/>
</dbReference>
<dbReference type="InterPro" id="IPR005389">
    <property type="entry name" value="OGR1_rcpt"/>
</dbReference>
<dbReference type="PANTHER" id="PTHR24234">
    <property type="entry name" value="LYSOPHOSPHATIDIC ACID RECEPTOR 5/SPHINGOSYLPHOSPHORYLCHOLINE RECEPTOR"/>
    <property type="match status" value="1"/>
</dbReference>
<dbReference type="PANTHER" id="PTHR24234:SF5">
    <property type="entry name" value="OVARIAN CANCER G-PROTEIN COUPLED RECEPTOR 1"/>
    <property type="match status" value="1"/>
</dbReference>
<dbReference type="Pfam" id="PF00001">
    <property type="entry name" value="7tm_1"/>
    <property type="match status" value="1"/>
</dbReference>
<dbReference type="PRINTS" id="PR00237">
    <property type="entry name" value="GPCRRHODOPSN"/>
</dbReference>
<dbReference type="PRINTS" id="PR01564">
    <property type="entry name" value="OGR1RECEPTOR"/>
</dbReference>
<dbReference type="SUPFAM" id="SSF81321">
    <property type="entry name" value="Family A G protein-coupled receptor-like"/>
    <property type="match status" value="1"/>
</dbReference>
<dbReference type="PROSITE" id="PS00237">
    <property type="entry name" value="G_PROTEIN_RECEP_F1_1"/>
    <property type="match status" value="1"/>
</dbReference>
<dbReference type="PROSITE" id="PS50262">
    <property type="entry name" value="G_PROTEIN_RECEP_F1_2"/>
    <property type="match status" value="1"/>
</dbReference>
<proteinExistence type="evidence at transcript level"/>
<feature type="chain" id="PRO_0000383597" description="G-protein coupled receptor 68">
    <location>
        <begin position="1"/>
        <end position="361"/>
    </location>
</feature>
<feature type="topological domain" description="Extracellular" evidence="1">
    <location>
        <begin position="1"/>
        <end position="12"/>
    </location>
</feature>
<feature type="transmembrane region" description="Helical; Name=1" evidence="1">
    <location>
        <begin position="13"/>
        <end position="49"/>
    </location>
</feature>
<feature type="topological domain" description="Cytoplasmic" evidence="1">
    <location>
        <begin position="50"/>
        <end position="53"/>
    </location>
</feature>
<feature type="transmembrane region" description="Helical; Name=2" evidence="1">
    <location>
        <begin position="54"/>
        <end position="84"/>
    </location>
</feature>
<feature type="topological domain" description="Extracellular" evidence="1">
    <location>
        <begin position="85"/>
        <end position="89"/>
    </location>
</feature>
<feature type="transmembrane region" description="Helical; Name=3" evidence="1">
    <location>
        <begin position="90"/>
        <end position="125"/>
    </location>
</feature>
<feature type="topological domain" description="Cytoplasmic" evidence="1">
    <location>
        <begin position="126"/>
        <end position="133"/>
    </location>
</feature>
<feature type="transmembrane region" description="Helical; Name=4" evidence="1">
    <location>
        <begin position="134"/>
        <end position="160"/>
    </location>
</feature>
<feature type="topological domain" description="Extracellular" evidence="1">
    <location>
        <begin position="161"/>
        <end position="176"/>
    </location>
</feature>
<feature type="transmembrane region" description="Helical; Name=5" evidence="1">
    <location>
        <begin position="177"/>
        <end position="214"/>
    </location>
</feature>
<feature type="topological domain" description="Cytoplasmic" evidence="1">
    <location>
        <begin position="215"/>
        <end position="218"/>
    </location>
</feature>
<feature type="transmembrane region" description="Helical; Name=6" evidence="1">
    <location>
        <begin position="219"/>
        <end position="254"/>
    </location>
</feature>
<feature type="topological domain" description="Extracellular" evidence="1">
    <location>
        <begin position="255"/>
        <end position="260"/>
    </location>
</feature>
<feature type="transmembrane region" description="Helical; Name=7" evidence="1">
    <location>
        <begin position="261"/>
        <end position="289"/>
    </location>
</feature>
<feature type="topological domain" description="Cytoplasmic" evidence="1">
    <location>
        <begin position="290"/>
        <end position="361"/>
    </location>
</feature>
<feature type="region of interest" description="Extracellular loop 2 (ECL2)" evidence="1">
    <location>
        <begin position="161"/>
        <end position="176"/>
    </location>
</feature>
<feature type="region of interest" description="Disordered" evidence="5">
    <location>
        <begin position="340"/>
        <end position="361"/>
    </location>
</feature>
<feature type="compositionally biased region" description="Gly residues" evidence="5">
    <location>
        <begin position="351"/>
        <end position="361"/>
    </location>
</feature>
<feature type="site" description="Proton sensing" evidence="1">
    <location>
        <position position="17"/>
    </location>
</feature>
<feature type="site" description="Proton sensing" evidence="1">
    <location>
        <position position="20"/>
    </location>
</feature>
<feature type="site" description="Proton sensing" evidence="1">
    <location>
        <position position="84"/>
    </location>
</feature>
<feature type="site" description="Required for activation" evidence="1">
    <location>
        <position position="149"/>
    </location>
</feature>
<feature type="site" description="Proton sensing" evidence="1">
    <location>
        <position position="169"/>
    </location>
</feature>
<feature type="site" description="Proton sensing" evidence="1">
    <location>
        <position position="269"/>
    </location>
</feature>
<feature type="glycosylation site" description="N-linked (GlcNAc...) asparagine" evidence="3">
    <location>
        <position position="3"/>
    </location>
</feature>
<feature type="glycosylation site" description="N-linked (GlcNAc...) asparagine" evidence="3">
    <location>
        <position position="8"/>
    </location>
</feature>
<feature type="disulfide bond" evidence="1">
    <location>
        <begin position="13"/>
        <end position="258"/>
    </location>
</feature>
<feature type="disulfide bond" evidence="4">
    <location>
        <begin position="94"/>
        <end position="172"/>
    </location>
</feature>
<keyword id="KW-1003">Cell membrane</keyword>
<keyword id="KW-1015">Disulfide bond</keyword>
<keyword id="KW-0297">G-protein coupled receptor</keyword>
<keyword id="KW-0325">Glycoprotein</keyword>
<keyword id="KW-0472">Membrane</keyword>
<keyword id="KW-0675">Receptor</keyword>
<keyword id="KW-1185">Reference proteome</keyword>
<keyword id="KW-0807">Transducer</keyword>
<keyword id="KW-0812">Transmembrane</keyword>
<keyword id="KW-1133">Transmembrane helix</keyword>
<keyword id="KW-0043">Tumor suppressor</keyword>
<organism>
    <name type="scientific">Bos taurus</name>
    <name type="common">Bovine</name>
    <dbReference type="NCBI Taxonomy" id="9913"/>
    <lineage>
        <taxon>Eukaryota</taxon>
        <taxon>Metazoa</taxon>
        <taxon>Chordata</taxon>
        <taxon>Craniata</taxon>
        <taxon>Vertebrata</taxon>
        <taxon>Euteleostomi</taxon>
        <taxon>Mammalia</taxon>
        <taxon>Eutheria</taxon>
        <taxon>Laurasiatheria</taxon>
        <taxon>Artiodactyla</taxon>
        <taxon>Ruminantia</taxon>
        <taxon>Pecora</taxon>
        <taxon>Bovidae</taxon>
        <taxon>Bovinae</taxon>
        <taxon>Bos</taxon>
    </lineage>
</organism>